<protein>
    <recommendedName>
        <fullName evidence="2">Purine nucleoside phosphorylase DeoD-type</fullName>
        <shortName evidence="2">PNP</shortName>
        <ecNumber evidence="2">2.4.2.1</ecNumber>
    </recommendedName>
</protein>
<dbReference type="EC" id="2.4.2.1" evidence="2"/>
<dbReference type="EMBL" id="CP001407">
    <property type="protein sequence ID" value="ACO25882.1"/>
    <property type="molecule type" value="Genomic_DNA"/>
</dbReference>
<dbReference type="RefSeq" id="WP_000110707.1">
    <property type="nucleotide sequence ID" value="NZ_CP009318.1"/>
</dbReference>
<dbReference type="SMR" id="C1EMV9"/>
<dbReference type="GeneID" id="93009578"/>
<dbReference type="KEGG" id="bcx:BCA_1520"/>
<dbReference type="PATRIC" id="fig|572264.18.peg.1468"/>
<dbReference type="Proteomes" id="UP000002210">
    <property type="component" value="Chromosome"/>
</dbReference>
<dbReference type="GO" id="GO:0005829">
    <property type="term" value="C:cytosol"/>
    <property type="evidence" value="ECO:0007669"/>
    <property type="project" value="TreeGrafter"/>
</dbReference>
<dbReference type="GO" id="GO:0004731">
    <property type="term" value="F:purine-nucleoside phosphorylase activity"/>
    <property type="evidence" value="ECO:0007669"/>
    <property type="project" value="UniProtKB-UniRule"/>
</dbReference>
<dbReference type="GO" id="GO:0006152">
    <property type="term" value="P:purine nucleoside catabolic process"/>
    <property type="evidence" value="ECO:0007669"/>
    <property type="project" value="TreeGrafter"/>
</dbReference>
<dbReference type="CDD" id="cd09006">
    <property type="entry name" value="PNP_EcPNPI-like"/>
    <property type="match status" value="1"/>
</dbReference>
<dbReference type="Gene3D" id="3.40.50.1580">
    <property type="entry name" value="Nucleoside phosphorylase domain"/>
    <property type="match status" value="1"/>
</dbReference>
<dbReference type="HAMAP" id="MF_01627">
    <property type="entry name" value="Pur_nucleosid_phosp"/>
    <property type="match status" value="1"/>
</dbReference>
<dbReference type="InterPro" id="IPR004402">
    <property type="entry name" value="DeoD-type"/>
</dbReference>
<dbReference type="InterPro" id="IPR018016">
    <property type="entry name" value="Nucleoside_phosphorylase_CS"/>
</dbReference>
<dbReference type="InterPro" id="IPR000845">
    <property type="entry name" value="Nucleoside_phosphorylase_d"/>
</dbReference>
<dbReference type="InterPro" id="IPR035994">
    <property type="entry name" value="Nucleoside_phosphorylase_sf"/>
</dbReference>
<dbReference type="NCBIfam" id="TIGR00107">
    <property type="entry name" value="deoD"/>
    <property type="match status" value="1"/>
</dbReference>
<dbReference type="NCBIfam" id="NF004489">
    <property type="entry name" value="PRK05819.1"/>
    <property type="match status" value="1"/>
</dbReference>
<dbReference type="NCBIfam" id="NF009914">
    <property type="entry name" value="PRK13374.1"/>
    <property type="match status" value="1"/>
</dbReference>
<dbReference type="PANTHER" id="PTHR43691:SF11">
    <property type="entry name" value="FI09636P-RELATED"/>
    <property type="match status" value="1"/>
</dbReference>
<dbReference type="PANTHER" id="PTHR43691">
    <property type="entry name" value="URIDINE PHOSPHORYLASE"/>
    <property type="match status" value="1"/>
</dbReference>
<dbReference type="Pfam" id="PF01048">
    <property type="entry name" value="PNP_UDP_1"/>
    <property type="match status" value="1"/>
</dbReference>
<dbReference type="SUPFAM" id="SSF53167">
    <property type="entry name" value="Purine and uridine phosphorylases"/>
    <property type="match status" value="1"/>
</dbReference>
<dbReference type="PROSITE" id="PS01232">
    <property type="entry name" value="PNP_UDP_1"/>
    <property type="match status" value="1"/>
</dbReference>
<feature type="chain" id="PRO_1000186175" description="Purine nucleoside phosphorylase DeoD-type">
    <location>
        <begin position="1"/>
        <end position="235"/>
    </location>
</feature>
<feature type="active site" description="Proton donor" evidence="2">
    <location>
        <position position="204"/>
    </location>
</feature>
<feature type="binding site" evidence="1">
    <location>
        <position position="4"/>
    </location>
    <ligand>
        <name>a purine D-ribonucleoside</name>
        <dbReference type="ChEBI" id="CHEBI:142355"/>
        <note>ligand shared between dimeric partners</note>
    </ligand>
</feature>
<feature type="binding site" description="in other chain" evidence="1">
    <location>
        <position position="20"/>
    </location>
    <ligand>
        <name>phosphate</name>
        <dbReference type="ChEBI" id="CHEBI:43474"/>
        <note>ligand shared between dimeric partners</note>
    </ligand>
</feature>
<feature type="binding site" description="in other chain" evidence="1">
    <location>
        <position position="24"/>
    </location>
    <ligand>
        <name>phosphate</name>
        <dbReference type="ChEBI" id="CHEBI:43474"/>
        <note>ligand shared between dimeric partners</note>
    </ligand>
</feature>
<feature type="binding site" evidence="1">
    <location>
        <position position="43"/>
    </location>
    <ligand>
        <name>phosphate</name>
        <dbReference type="ChEBI" id="CHEBI:43474"/>
        <note>ligand shared between dimeric partners</note>
    </ligand>
</feature>
<feature type="binding site" description="in other chain" evidence="1">
    <location>
        <begin position="87"/>
        <end position="90"/>
    </location>
    <ligand>
        <name>phosphate</name>
        <dbReference type="ChEBI" id="CHEBI:43474"/>
        <note>ligand shared between dimeric partners</note>
    </ligand>
</feature>
<feature type="binding site" description="in other chain" evidence="1">
    <location>
        <position position="162"/>
    </location>
    <ligand>
        <name>a purine D-ribonucleoside</name>
        <dbReference type="ChEBI" id="CHEBI:142355"/>
        <note>ligand shared between dimeric partners</note>
    </ligand>
</feature>
<feature type="binding site" description="in other chain" evidence="1">
    <location>
        <begin position="179"/>
        <end position="181"/>
    </location>
    <ligand>
        <name>a purine D-ribonucleoside</name>
        <dbReference type="ChEBI" id="CHEBI:142355"/>
        <note>ligand shared between dimeric partners</note>
    </ligand>
</feature>
<feature type="binding site" description="in other chain" evidence="1">
    <location>
        <begin position="203"/>
        <end position="204"/>
    </location>
    <ligand>
        <name>a purine D-ribonucleoside</name>
        <dbReference type="ChEBI" id="CHEBI:142355"/>
        <note>ligand shared between dimeric partners</note>
    </ligand>
</feature>
<feature type="site" description="Important for catalytic activity" evidence="2">
    <location>
        <position position="217"/>
    </location>
</feature>
<comment type="function">
    <text evidence="2">Catalyzes the reversible phosphorolytic breakdown of the N-glycosidic bond in the beta-(deoxy)ribonucleoside molecules, with the formation of the corresponding free purine bases and pentose-1-phosphate.</text>
</comment>
<comment type="catalytic activity">
    <reaction evidence="2">
        <text>a purine D-ribonucleoside + phosphate = a purine nucleobase + alpha-D-ribose 1-phosphate</text>
        <dbReference type="Rhea" id="RHEA:19805"/>
        <dbReference type="ChEBI" id="CHEBI:26386"/>
        <dbReference type="ChEBI" id="CHEBI:43474"/>
        <dbReference type="ChEBI" id="CHEBI:57720"/>
        <dbReference type="ChEBI" id="CHEBI:142355"/>
        <dbReference type="EC" id="2.4.2.1"/>
    </reaction>
</comment>
<comment type="catalytic activity">
    <reaction evidence="2">
        <text>a purine 2'-deoxy-D-ribonucleoside + phosphate = a purine nucleobase + 2-deoxy-alpha-D-ribose 1-phosphate</text>
        <dbReference type="Rhea" id="RHEA:36431"/>
        <dbReference type="ChEBI" id="CHEBI:26386"/>
        <dbReference type="ChEBI" id="CHEBI:43474"/>
        <dbReference type="ChEBI" id="CHEBI:57259"/>
        <dbReference type="ChEBI" id="CHEBI:142361"/>
        <dbReference type="EC" id="2.4.2.1"/>
    </reaction>
</comment>
<comment type="subunit">
    <text evidence="2">Homohexamer; trimer of homodimers.</text>
</comment>
<comment type="similarity">
    <text evidence="2">Belongs to the PNP/UDP phosphorylase family.</text>
</comment>
<accession>C1EMV9</accession>
<evidence type="ECO:0000250" key="1">
    <source>
        <dbReference type="UniProtKB" id="P50389"/>
    </source>
</evidence>
<evidence type="ECO:0000255" key="2">
    <source>
        <dbReference type="HAMAP-Rule" id="MF_01627"/>
    </source>
</evidence>
<keyword id="KW-0328">Glycosyltransferase</keyword>
<keyword id="KW-0808">Transferase</keyword>
<reference key="1">
    <citation type="submission" date="2009-02" db="EMBL/GenBank/DDBJ databases">
        <title>Genome sequence of Bacillus cereus 03BB102.</title>
        <authorList>
            <person name="Dodson R.J."/>
            <person name="Jackson P."/>
            <person name="Munk A.C."/>
            <person name="Brettin T."/>
            <person name="Bruce D."/>
            <person name="Detter C."/>
            <person name="Tapia R."/>
            <person name="Han C."/>
            <person name="Sutton G."/>
            <person name="Sims D."/>
        </authorList>
    </citation>
    <scope>NUCLEOTIDE SEQUENCE [LARGE SCALE GENOMIC DNA]</scope>
    <source>
        <strain>03BB102</strain>
    </source>
</reference>
<sequence>MSVHIEAKQGEIAESILLPGDPLRAKYIAETFLEDVTCYNNVRGMLGFTGTYKGKRVSVQGTGMGVPSISIYVNELIQSYGVKNLIRVGTCGAIQKDVKVRDVIIAMTACTDSNMNRLTFPGFDFAPAANFDLLKKAYDAGTEKGLHVRVGNVLTADVFYRESMDMVKKLGDYGVLAVEMETTALYTLAAKYGVNALSVLTVSDHIFTGEETTSEERQTTFNEMIEIALDAAIQQ</sequence>
<proteinExistence type="inferred from homology"/>
<organism>
    <name type="scientific">Bacillus cereus (strain 03BB102)</name>
    <dbReference type="NCBI Taxonomy" id="572264"/>
    <lineage>
        <taxon>Bacteria</taxon>
        <taxon>Bacillati</taxon>
        <taxon>Bacillota</taxon>
        <taxon>Bacilli</taxon>
        <taxon>Bacillales</taxon>
        <taxon>Bacillaceae</taxon>
        <taxon>Bacillus</taxon>
        <taxon>Bacillus cereus group</taxon>
    </lineage>
</organism>
<name>DEOD_BACC3</name>
<gene>
    <name evidence="2" type="primary">deoD</name>
    <name type="ordered locus">BCA_1520</name>
</gene>